<protein>
    <recommendedName>
        <fullName evidence="1">3-hydroxyacyl-[acyl-carrier-protein] dehydratase FabZ</fullName>
        <ecNumber evidence="1">4.2.1.59</ecNumber>
    </recommendedName>
    <alternativeName>
        <fullName evidence="1">(3R)-hydroxymyristoyl-[acyl-carrier-protein] dehydratase</fullName>
        <shortName evidence="1">(3R)-hydroxymyristoyl-ACP dehydrase</shortName>
    </alternativeName>
    <alternativeName>
        <fullName evidence="1">Beta-hydroxyacyl-ACP dehydratase</fullName>
    </alternativeName>
</protein>
<name>FABZ_PEDPA</name>
<sequence>MSILNTTEIMELIPNRYPILFMDYVDELEPGKSIVATKNVTINEEFFQGHFPGNPVMPGVLIIESLAQAASILILKSEEFAGKTAYLGAINGAKFRQIVRPGDVLKLHVEMIKKKRNMGVVETFAMVGDKKVCQAELTFIVGATDKKDK</sequence>
<evidence type="ECO:0000255" key="1">
    <source>
        <dbReference type="HAMAP-Rule" id="MF_00406"/>
    </source>
</evidence>
<keyword id="KW-0963">Cytoplasm</keyword>
<keyword id="KW-0441">Lipid A biosynthesis</keyword>
<keyword id="KW-0444">Lipid biosynthesis</keyword>
<keyword id="KW-0443">Lipid metabolism</keyword>
<keyword id="KW-0456">Lyase</keyword>
<gene>
    <name evidence="1" type="primary">fabZ</name>
    <name type="ordered locus">PEPE_0854</name>
</gene>
<accession>Q03FV9</accession>
<proteinExistence type="inferred from homology"/>
<organism>
    <name type="scientific">Pediococcus pentosaceus (strain ATCC 25745 / CCUG 21536 / LMG 10740 / 183-1w)</name>
    <dbReference type="NCBI Taxonomy" id="278197"/>
    <lineage>
        <taxon>Bacteria</taxon>
        <taxon>Bacillati</taxon>
        <taxon>Bacillota</taxon>
        <taxon>Bacilli</taxon>
        <taxon>Lactobacillales</taxon>
        <taxon>Lactobacillaceae</taxon>
        <taxon>Pediococcus</taxon>
    </lineage>
</organism>
<dbReference type="EC" id="4.2.1.59" evidence="1"/>
<dbReference type="EMBL" id="CP000422">
    <property type="protein sequence ID" value="ABJ67913.1"/>
    <property type="molecule type" value="Genomic_DNA"/>
</dbReference>
<dbReference type="SMR" id="Q03FV9"/>
<dbReference type="STRING" id="278197.PEPE_0854"/>
<dbReference type="KEGG" id="ppe:PEPE_0854"/>
<dbReference type="eggNOG" id="COG0764">
    <property type="taxonomic scope" value="Bacteria"/>
</dbReference>
<dbReference type="HOGENOM" id="CLU_078912_1_1_9"/>
<dbReference type="OrthoDB" id="9772788at2"/>
<dbReference type="Proteomes" id="UP000000773">
    <property type="component" value="Chromosome"/>
</dbReference>
<dbReference type="GO" id="GO:0005737">
    <property type="term" value="C:cytoplasm"/>
    <property type="evidence" value="ECO:0007669"/>
    <property type="project" value="UniProtKB-SubCell"/>
</dbReference>
<dbReference type="GO" id="GO:0016020">
    <property type="term" value="C:membrane"/>
    <property type="evidence" value="ECO:0007669"/>
    <property type="project" value="GOC"/>
</dbReference>
<dbReference type="GO" id="GO:0019171">
    <property type="term" value="F:(3R)-hydroxyacyl-[acyl-carrier-protein] dehydratase activity"/>
    <property type="evidence" value="ECO:0007669"/>
    <property type="project" value="UniProtKB-EC"/>
</dbReference>
<dbReference type="GO" id="GO:0006633">
    <property type="term" value="P:fatty acid biosynthetic process"/>
    <property type="evidence" value="ECO:0007669"/>
    <property type="project" value="UniProtKB-UniRule"/>
</dbReference>
<dbReference type="GO" id="GO:0009245">
    <property type="term" value="P:lipid A biosynthetic process"/>
    <property type="evidence" value="ECO:0007669"/>
    <property type="project" value="UniProtKB-UniRule"/>
</dbReference>
<dbReference type="CDD" id="cd01288">
    <property type="entry name" value="FabZ"/>
    <property type="match status" value="1"/>
</dbReference>
<dbReference type="FunFam" id="3.10.129.10:FF:000001">
    <property type="entry name" value="3-hydroxyacyl-[acyl-carrier-protein] dehydratase FabZ"/>
    <property type="match status" value="1"/>
</dbReference>
<dbReference type="Gene3D" id="3.10.129.10">
    <property type="entry name" value="Hotdog Thioesterase"/>
    <property type="match status" value="1"/>
</dbReference>
<dbReference type="HAMAP" id="MF_00406">
    <property type="entry name" value="FabZ"/>
    <property type="match status" value="1"/>
</dbReference>
<dbReference type="InterPro" id="IPR013114">
    <property type="entry name" value="FabA_FabZ"/>
</dbReference>
<dbReference type="InterPro" id="IPR010084">
    <property type="entry name" value="FabZ"/>
</dbReference>
<dbReference type="InterPro" id="IPR029069">
    <property type="entry name" value="HotDog_dom_sf"/>
</dbReference>
<dbReference type="NCBIfam" id="TIGR01750">
    <property type="entry name" value="fabZ"/>
    <property type="match status" value="1"/>
</dbReference>
<dbReference type="NCBIfam" id="NF000582">
    <property type="entry name" value="PRK00006.1"/>
    <property type="match status" value="1"/>
</dbReference>
<dbReference type="PANTHER" id="PTHR30272">
    <property type="entry name" value="3-HYDROXYACYL-[ACYL-CARRIER-PROTEIN] DEHYDRATASE"/>
    <property type="match status" value="1"/>
</dbReference>
<dbReference type="PANTHER" id="PTHR30272:SF1">
    <property type="entry name" value="3-HYDROXYACYL-[ACYL-CARRIER-PROTEIN] DEHYDRATASE"/>
    <property type="match status" value="1"/>
</dbReference>
<dbReference type="Pfam" id="PF07977">
    <property type="entry name" value="FabA"/>
    <property type="match status" value="1"/>
</dbReference>
<dbReference type="SUPFAM" id="SSF54637">
    <property type="entry name" value="Thioesterase/thiol ester dehydrase-isomerase"/>
    <property type="match status" value="1"/>
</dbReference>
<feature type="chain" id="PRO_0000301907" description="3-hydroxyacyl-[acyl-carrier-protein] dehydratase FabZ">
    <location>
        <begin position="1"/>
        <end position="149"/>
    </location>
</feature>
<feature type="active site" evidence="1">
    <location>
        <position position="50"/>
    </location>
</feature>
<reference key="1">
    <citation type="journal article" date="2006" name="Proc. Natl. Acad. Sci. U.S.A.">
        <title>Comparative genomics of the lactic acid bacteria.</title>
        <authorList>
            <person name="Makarova K.S."/>
            <person name="Slesarev A."/>
            <person name="Wolf Y.I."/>
            <person name="Sorokin A."/>
            <person name="Mirkin B."/>
            <person name="Koonin E.V."/>
            <person name="Pavlov A."/>
            <person name="Pavlova N."/>
            <person name="Karamychev V."/>
            <person name="Polouchine N."/>
            <person name="Shakhova V."/>
            <person name="Grigoriev I."/>
            <person name="Lou Y."/>
            <person name="Rohksar D."/>
            <person name="Lucas S."/>
            <person name="Huang K."/>
            <person name="Goodstein D.M."/>
            <person name="Hawkins T."/>
            <person name="Plengvidhya V."/>
            <person name="Welker D."/>
            <person name="Hughes J."/>
            <person name="Goh Y."/>
            <person name="Benson A."/>
            <person name="Baldwin K."/>
            <person name="Lee J.-H."/>
            <person name="Diaz-Muniz I."/>
            <person name="Dosti B."/>
            <person name="Smeianov V."/>
            <person name="Wechter W."/>
            <person name="Barabote R."/>
            <person name="Lorca G."/>
            <person name="Altermann E."/>
            <person name="Barrangou R."/>
            <person name="Ganesan B."/>
            <person name="Xie Y."/>
            <person name="Rawsthorne H."/>
            <person name="Tamir D."/>
            <person name="Parker C."/>
            <person name="Breidt F."/>
            <person name="Broadbent J.R."/>
            <person name="Hutkins R."/>
            <person name="O'Sullivan D."/>
            <person name="Steele J."/>
            <person name="Unlu G."/>
            <person name="Saier M.H. Jr."/>
            <person name="Klaenhammer T."/>
            <person name="Richardson P."/>
            <person name="Kozyavkin S."/>
            <person name="Weimer B.C."/>
            <person name="Mills D.A."/>
        </authorList>
    </citation>
    <scope>NUCLEOTIDE SEQUENCE [LARGE SCALE GENOMIC DNA]</scope>
    <source>
        <strain>ATCC 25745 / CCUG 21536 / LMG 10740 / 183-1w</strain>
    </source>
</reference>
<comment type="function">
    <text evidence="1">Involved in unsaturated fatty acids biosynthesis. Catalyzes the dehydration of short chain beta-hydroxyacyl-ACPs and long chain saturated and unsaturated beta-hydroxyacyl-ACPs.</text>
</comment>
<comment type="catalytic activity">
    <reaction evidence="1">
        <text>a (3R)-hydroxyacyl-[ACP] = a (2E)-enoyl-[ACP] + H2O</text>
        <dbReference type="Rhea" id="RHEA:13097"/>
        <dbReference type="Rhea" id="RHEA-COMP:9925"/>
        <dbReference type="Rhea" id="RHEA-COMP:9945"/>
        <dbReference type="ChEBI" id="CHEBI:15377"/>
        <dbReference type="ChEBI" id="CHEBI:78784"/>
        <dbReference type="ChEBI" id="CHEBI:78827"/>
        <dbReference type="EC" id="4.2.1.59"/>
    </reaction>
</comment>
<comment type="subcellular location">
    <subcellularLocation>
        <location evidence="1">Cytoplasm</location>
    </subcellularLocation>
</comment>
<comment type="similarity">
    <text evidence="1">Belongs to the thioester dehydratase family. FabZ subfamily.</text>
</comment>